<organism>
    <name type="scientific">Burkholderia orbicola (strain MC0-3)</name>
    <dbReference type="NCBI Taxonomy" id="406425"/>
    <lineage>
        <taxon>Bacteria</taxon>
        <taxon>Pseudomonadati</taxon>
        <taxon>Pseudomonadota</taxon>
        <taxon>Betaproteobacteria</taxon>
        <taxon>Burkholderiales</taxon>
        <taxon>Burkholderiaceae</taxon>
        <taxon>Burkholderia</taxon>
        <taxon>Burkholderia cepacia complex</taxon>
        <taxon>Burkholderia orbicola</taxon>
    </lineage>
</organism>
<gene>
    <name evidence="1" type="primary">gltX</name>
    <name type="ordered locus">Bcenmc03_2075</name>
</gene>
<feature type="chain" id="PRO_1000090056" description="Glutamate--tRNA ligase">
    <location>
        <begin position="1"/>
        <end position="469"/>
    </location>
</feature>
<feature type="short sequence motif" description="'HIGH' region" evidence="1">
    <location>
        <begin position="11"/>
        <end position="21"/>
    </location>
</feature>
<feature type="short sequence motif" description="'KMSKS' region" evidence="1">
    <location>
        <begin position="243"/>
        <end position="247"/>
    </location>
</feature>
<feature type="binding site" evidence="1">
    <location>
        <position position="246"/>
    </location>
    <ligand>
        <name>ATP</name>
        <dbReference type="ChEBI" id="CHEBI:30616"/>
    </ligand>
</feature>
<keyword id="KW-0030">Aminoacyl-tRNA synthetase</keyword>
<keyword id="KW-0067">ATP-binding</keyword>
<keyword id="KW-0963">Cytoplasm</keyword>
<keyword id="KW-0436">Ligase</keyword>
<keyword id="KW-0547">Nucleotide-binding</keyword>
<keyword id="KW-0648">Protein biosynthesis</keyword>
<protein>
    <recommendedName>
        <fullName evidence="1">Glutamate--tRNA ligase</fullName>
        <ecNumber evidence="1">6.1.1.17</ecNumber>
    </recommendedName>
    <alternativeName>
        <fullName evidence="1">Glutamyl-tRNA synthetase</fullName>
        <shortName evidence="1">GluRS</shortName>
    </alternativeName>
</protein>
<proteinExistence type="inferred from homology"/>
<comment type="function">
    <text evidence="1">Catalyzes the attachment of glutamate to tRNA(Glu) in a two-step reaction: glutamate is first activated by ATP to form Glu-AMP and then transferred to the acceptor end of tRNA(Glu).</text>
</comment>
<comment type="catalytic activity">
    <reaction evidence="1">
        <text>tRNA(Glu) + L-glutamate + ATP = L-glutamyl-tRNA(Glu) + AMP + diphosphate</text>
        <dbReference type="Rhea" id="RHEA:23540"/>
        <dbReference type="Rhea" id="RHEA-COMP:9663"/>
        <dbReference type="Rhea" id="RHEA-COMP:9680"/>
        <dbReference type="ChEBI" id="CHEBI:29985"/>
        <dbReference type="ChEBI" id="CHEBI:30616"/>
        <dbReference type="ChEBI" id="CHEBI:33019"/>
        <dbReference type="ChEBI" id="CHEBI:78442"/>
        <dbReference type="ChEBI" id="CHEBI:78520"/>
        <dbReference type="ChEBI" id="CHEBI:456215"/>
        <dbReference type="EC" id="6.1.1.17"/>
    </reaction>
</comment>
<comment type="subunit">
    <text evidence="1">Monomer.</text>
</comment>
<comment type="subcellular location">
    <subcellularLocation>
        <location evidence="1">Cytoplasm</location>
    </subcellularLocation>
</comment>
<comment type="similarity">
    <text evidence="1">Belongs to the class-I aminoacyl-tRNA synthetase family. Glutamate--tRNA ligase type 1 subfamily.</text>
</comment>
<accession>B1JUI6</accession>
<reference key="1">
    <citation type="submission" date="2008-02" db="EMBL/GenBank/DDBJ databases">
        <title>Complete sequence of chromosome 1 of Burkholderia cenocepacia MC0-3.</title>
        <authorList>
            <person name="Copeland A."/>
            <person name="Lucas S."/>
            <person name="Lapidus A."/>
            <person name="Barry K."/>
            <person name="Bruce D."/>
            <person name="Goodwin L."/>
            <person name="Glavina del Rio T."/>
            <person name="Dalin E."/>
            <person name="Tice H."/>
            <person name="Pitluck S."/>
            <person name="Chain P."/>
            <person name="Malfatti S."/>
            <person name="Shin M."/>
            <person name="Vergez L."/>
            <person name="Schmutz J."/>
            <person name="Larimer F."/>
            <person name="Land M."/>
            <person name="Hauser L."/>
            <person name="Kyrpides N."/>
            <person name="Mikhailova N."/>
            <person name="Tiedje J."/>
            <person name="Richardson P."/>
        </authorList>
    </citation>
    <scope>NUCLEOTIDE SEQUENCE [LARGE SCALE GENOMIC DNA]</scope>
    <source>
        <strain>MC0-3</strain>
    </source>
</reference>
<sequence>MTRPVRTRFAPSPTGFIHLGNIRSALYPWAFARKMKGTFVLRIEDTDVERSSQEAVDAILEGMQWLGLDFDEGPIYQMQRMDRYREVLAQMLEKGLAYPCYMSAEELDALRERQREAGLKPRYDGTWRPEPGKVLPEPPAGVKPVLRFRNPLTGTVVWDDAVKGRVEISNEELDDLVIARPDGTPIYNFCVVVDDMDMGITHVIRGDDHVNNTPRQINILNALGGEPPVYAHLPTVLNEQGEKMSKRHGAMSVMAYRDAGFLPEAVVNYLARLGWSHGDAEIFSREQFVEWFDLEHLGKSPAQYDHSKLSWLNAHYIKEADNARLAELAKPFLDALGIDDAAIATGPALDAVVGLMKDRATTVKEIAEGAAMFYRVPAPDADALAQHVTDAVRPALADLAAALKAADWTKEAVSAALKATLATHKLKMPQLAMPVRLLVAGTTHTPSIDAVLVLFGRDVVVTRIEAALA</sequence>
<evidence type="ECO:0000255" key="1">
    <source>
        <dbReference type="HAMAP-Rule" id="MF_00022"/>
    </source>
</evidence>
<name>SYE_BURO0</name>
<dbReference type="EC" id="6.1.1.17" evidence="1"/>
<dbReference type="EMBL" id="CP000958">
    <property type="protein sequence ID" value="ACA91236.1"/>
    <property type="molecule type" value="Genomic_DNA"/>
</dbReference>
<dbReference type="RefSeq" id="WP_011694315.1">
    <property type="nucleotide sequence ID" value="NC_010508.1"/>
</dbReference>
<dbReference type="SMR" id="B1JUI6"/>
<dbReference type="GeneID" id="83048858"/>
<dbReference type="KEGG" id="bcm:Bcenmc03_2075"/>
<dbReference type="HOGENOM" id="CLU_015768_6_0_4"/>
<dbReference type="Proteomes" id="UP000002169">
    <property type="component" value="Chromosome 1"/>
</dbReference>
<dbReference type="GO" id="GO:0005829">
    <property type="term" value="C:cytosol"/>
    <property type="evidence" value="ECO:0007669"/>
    <property type="project" value="TreeGrafter"/>
</dbReference>
<dbReference type="GO" id="GO:0005524">
    <property type="term" value="F:ATP binding"/>
    <property type="evidence" value="ECO:0007669"/>
    <property type="project" value="UniProtKB-UniRule"/>
</dbReference>
<dbReference type="GO" id="GO:0004818">
    <property type="term" value="F:glutamate-tRNA ligase activity"/>
    <property type="evidence" value="ECO:0007669"/>
    <property type="project" value="UniProtKB-UniRule"/>
</dbReference>
<dbReference type="GO" id="GO:0000049">
    <property type="term" value="F:tRNA binding"/>
    <property type="evidence" value="ECO:0007669"/>
    <property type="project" value="InterPro"/>
</dbReference>
<dbReference type="GO" id="GO:0008270">
    <property type="term" value="F:zinc ion binding"/>
    <property type="evidence" value="ECO:0007669"/>
    <property type="project" value="InterPro"/>
</dbReference>
<dbReference type="GO" id="GO:0006424">
    <property type="term" value="P:glutamyl-tRNA aminoacylation"/>
    <property type="evidence" value="ECO:0007669"/>
    <property type="project" value="UniProtKB-UniRule"/>
</dbReference>
<dbReference type="CDD" id="cd00808">
    <property type="entry name" value="GluRS_core"/>
    <property type="match status" value="1"/>
</dbReference>
<dbReference type="FunFam" id="3.40.50.620:FF:000007">
    <property type="entry name" value="Glutamate--tRNA ligase"/>
    <property type="match status" value="1"/>
</dbReference>
<dbReference type="Gene3D" id="1.10.10.350">
    <property type="match status" value="1"/>
</dbReference>
<dbReference type="Gene3D" id="1.10.8.70">
    <property type="entry name" value="Glutamate-tRNA synthetase, class I, anticodon-binding domain 1"/>
    <property type="match status" value="1"/>
</dbReference>
<dbReference type="Gene3D" id="3.40.50.620">
    <property type="entry name" value="HUPs"/>
    <property type="match status" value="1"/>
</dbReference>
<dbReference type="HAMAP" id="MF_00022">
    <property type="entry name" value="Glu_tRNA_synth_type1"/>
    <property type="match status" value="1"/>
</dbReference>
<dbReference type="InterPro" id="IPR045462">
    <property type="entry name" value="aa-tRNA-synth_I_cd-bd"/>
</dbReference>
<dbReference type="InterPro" id="IPR020751">
    <property type="entry name" value="aa-tRNA-synth_I_codon-bd_sub2"/>
</dbReference>
<dbReference type="InterPro" id="IPR001412">
    <property type="entry name" value="aa-tRNA-synth_I_CS"/>
</dbReference>
<dbReference type="InterPro" id="IPR008925">
    <property type="entry name" value="aa_tRNA-synth_I_cd-bd_sf"/>
</dbReference>
<dbReference type="InterPro" id="IPR004527">
    <property type="entry name" value="Glu-tRNA-ligase_bac/mito"/>
</dbReference>
<dbReference type="InterPro" id="IPR020752">
    <property type="entry name" value="Glu-tRNA-synth_I_codon-bd_sub1"/>
</dbReference>
<dbReference type="InterPro" id="IPR000924">
    <property type="entry name" value="Glu/Gln-tRNA-synth"/>
</dbReference>
<dbReference type="InterPro" id="IPR020058">
    <property type="entry name" value="Glu/Gln-tRNA-synth_Ib_cat-dom"/>
</dbReference>
<dbReference type="InterPro" id="IPR049940">
    <property type="entry name" value="GluQ/Sye"/>
</dbReference>
<dbReference type="InterPro" id="IPR033910">
    <property type="entry name" value="GluRS_core"/>
</dbReference>
<dbReference type="InterPro" id="IPR014729">
    <property type="entry name" value="Rossmann-like_a/b/a_fold"/>
</dbReference>
<dbReference type="NCBIfam" id="TIGR00464">
    <property type="entry name" value="gltX_bact"/>
    <property type="match status" value="1"/>
</dbReference>
<dbReference type="PANTHER" id="PTHR43311">
    <property type="entry name" value="GLUTAMATE--TRNA LIGASE"/>
    <property type="match status" value="1"/>
</dbReference>
<dbReference type="PANTHER" id="PTHR43311:SF2">
    <property type="entry name" value="GLUTAMATE--TRNA LIGASE, MITOCHONDRIAL-RELATED"/>
    <property type="match status" value="1"/>
</dbReference>
<dbReference type="Pfam" id="PF19269">
    <property type="entry name" value="Anticodon_2"/>
    <property type="match status" value="1"/>
</dbReference>
<dbReference type="Pfam" id="PF00749">
    <property type="entry name" value="tRNA-synt_1c"/>
    <property type="match status" value="1"/>
</dbReference>
<dbReference type="PRINTS" id="PR00987">
    <property type="entry name" value="TRNASYNTHGLU"/>
</dbReference>
<dbReference type="SUPFAM" id="SSF48163">
    <property type="entry name" value="An anticodon-binding domain of class I aminoacyl-tRNA synthetases"/>
    <property type="match status" value="1"/>
</dbReference>
<dbReference type="SUPFAM" id="SSF52374">
    <property type="entry name" value="Nucleotidylyl transferase"/>
    <property type="match status" value="1"/>
</dbReference>
<dbReference type="PROSITE" id="PS00178">
    <property type="entry name" value="AA_TRNA_LIGASE_I"/>
    <property type="match status" value="1"/>
</dbReference>